<gene>
    <name type="primary">UBE1Y</name>
    <name type="synonym">SBY</name>
</gene>
<evidence type="ECO:0000250" key="1"/>
<evidence type="ECO:0000250" key="2">
    <source>
        <dbReference type="UniProtKB" id="P22314"/>
    </source>
</evidence>
<evidence type="ECO:0000255" key="3">
    <source>
        <dbReference type="PROSITE-ProRule" id="PRU10132"/>
    </source>
</evidence>
<evidence type="ECO:0000305" key="4"/>
<keyword id="KW-0067">ATP-binding</keyword>
<keyword id="KW-0436">Ligase</keyword>
<keyword id="KW-0547">Nucleotide-binding</keyword>
<keyword id="KW-0833">Ubl conjugation pathway</keyword>
<feature type="chain" id="PRO_0000194940" description="Ubiquitin-activating enzyme E1 Y">
    <location>
        <begin position="1" status="less than"/>
        <end position="152" status="greater than"/>
    </location>
</feature>
<feature type="active site" description="Glycyl thioester intermediate" evidence="3">
    <location>
        <position position="51"/>
    </location>
</feature>
<feature type="non-terminal residue">
    <location>
        <position position="1"/>
    </location>
</feature>
<feature type="non-terminal residue">
    <location>
        <position position="152"/>
    </location>
</feature>
<accession>P31255</accession>
<sequence length="152" mass="17719">MYMDRHCVYYRKPLLESGTLGTKGNIQVVIPFLTESYSSSQDPPEKSIPICTLKNFPNAIEHTLQWARDEFESLFKQPAENVNQYLTNPKFVERTLRLGGTQPLEVLEAVHRSLVLQRPHDWADCVTWACLHWHSQYANNIRQLLHNFPPEQ</sequence>
<proteinExistence type="evidence at transcript level"/>
<name>UBE1Y_OSPRU</name>
<reference key="1">
    <citation type="journal article" date="1992" name="Nature">
        <title>Marsupial Y chromosome encodes a homologue of the mouse Y-linked candidate spermatogenesis gene Ube1y.</title>
        <authorList>
            <person name="Mitchell M.J."/>
            <person name="Woods D.R."/>
            <person name="Wilcox S.A."/>
            <person name="Graves J.A."/>
            <person name="Bishop C.E."/>
        </authorList>
    </citation>
    <scope>NUCLEOTIDE SEQUENCE [GENOMIC DNA / MRNA]</scope>
</reference>
<comment type="function">
    <text evidence="2 4">Activates ubiquitin by first adenylating its C-terminal glycine residue with ATP, and thereafter linking this residue to the side chain of a cysteine residue in E1, yielding a ubiquitin-E1 thioester and free AMP (By similarity). The Y chromosome form could be involved in the survival and proliferation of differentiating spermatogonia.</text>
</comment>
<comment type="catalytic activity">
    <reaction evidence="2">
        <text>ATP + ubiquitin + [E1 ubiquitin-activating enzyme]-L-cysteine = AMP + diphosphate + S-ubiquitinyl-[E1 ubiquitin-activating enzyme]-L-cysteine.</text>
        <dbReference type="EC" id="6.2.1.45"/>
    </reaction>
</comment>
<comment type="pathway">
    <text evidence="2">Protein modification; protein ubiquitination.</text>
</comment>
<comment type="subunit">
    <text evidence="1">Monomer.</text>
</comment>
<comment type="miscellaneous">
    <text evidence="2">There are two active sites within the E1 molecule, allowing it to accommodate two ubiquitin moieties at a time, with a new ubiquitin forming an adenylate intermediate as the previous one is transferred to the thiol site.</text>
</comment>
<comment type="similarity">
    <text evidence="4">Belongs to the ubiquitin-activating E1 family.</text>
</comment>
<organism>
    <name type="scientific">Osphranter rufus</name>
    <name type="common">Red kangaroo</name>
    <name type="synonym">Macropus rufus</name>
    <dbReference type="NCBI Taxonomy" id="9321"/>
    <lineage>
        <taxon>Eukaryota</taxon>
        <taxon>Metazoa</taxon>
        <taxon>Chordata</taxon>
        <taxon>Craniata</taxon>
        <taxon>Vertebrata</taxon>
        <taxon>Euteleostomi</taxon>
        <taxon>Mammalia</taxon>
        <taxon>Metatheria</taxon>
        <taxon>Diprotodontia</taxon>
        <taxon>Macropodidae</taxon>
        <taxon>Osphranter</taxon>
    </lineage>
</organism>
<dbReference type="EC" id="6.2.1.45" evidence="2"/>
<dbReference type="EMBL" id="Z29668">
    <property type="protein sequence ID" value="CAA82766.1"/>
    <property type="molecule type" value="Genomic_DNA"/>
</dbReference>
<dbReference type="EMBL" id="X68940">
    <property type="protein sequence ID" value="CAA48758.1"/>
    <property type="molecule type" value="mRNA"/>
</dbReference>
<dbReference type="PIR" id="S29752">
    <property type="entry name" value="S29752"/>
</dbReference>
<dbReference type="SMR" id="P31255"/>
<dbReference type="UniPathway" id="UPA00143"/>
<dbReference type="GO" id="GO:0005737">
    <property type="term" value="C:cytoplasm"/>
    <property type="evidence" value="ECO:0007669"/>
    <property type="project" value="TreeGrafter"/>
</dbReference>
<dbReference type="GO" id="GO:0005634">
    <property type="term" value="C:nucleus"/>
    <property type="evidence" value="ECO:0007669"/>
    <property type="project" value="TreeGrafter"/>
</dbReference>
<dbReference type="GO" id="GO:0005524">
    <property type="term" value="F:ATP binding"/>
    <property type="evidence" value="ECO:0007669"/>
    <property type="project" value="UniProtKB-KW"/>
</dbReference>
<dbReference type="GO" id="GO:0004839">
    <property type="term" value="F:ubiquitin activating enzyme activity"/>
    <property type="evidence" value="ECO:0007669"/>
    <property type="project" value="UniProtKB-EC"/>
</dbReference>
<dbReference type="GO" id="GO:0006974">
    <property type="term" value="P:DNA damage response"/>
    <property type="evidence" value="ECO:0007669"/>
    <property type="project" value="TreeGrafter"/>
</dbReference>
<dbReference type="GO" id="GO:0006511">
    <property type="term" value="P:ubiquitin-dependent protein catabolic process"/>
    <property type="evidence" value="ECO:0007669"/>
    <property type="project" value="TreeGrafter"/>
</dbReference>
<dbReference type="Gene3D" id="3.40.50.720">
    <property type="entry name" value="NAD(P)-binding Rossmann-like Domain"/>
    <property type="match status" value="1"/>
</dbReference>
<dbReference type="Gene3D" id="1.10.10.2660">
    <property type="entry name" value="Ubiquitin-activating enzyme E1, SCCH domain"/>
    <property type="match status" value="1"/>
</dbReference>
<dbReference type="InterPro" id="IPR045886">
    <property type="entry name" value="ThiF/MoeB/HesA"/>
</dbReference>
<dbReference type="InterPro" id="IPR000594">
    <property type="entry name" value="ThiF_NAD_FAD-bd"/>
</dbReference>
<dbReference type="InterPro" id="IPR019572">
    <property type="entry name" value="UBA_E1_SCCH"/>
</dbReference>
<dbReference type="InterPro" id="IPR042063">
    <property type="entry name" value="Ubi_acti_E1_SCCH"/>
</dbReference>
<dbReference type="InterPro" id="IPR035985">
    <property type="entry name" value="Ubiquitin-activating_enz"/>
</dbReference>
<dbReference type="InterPro" id="IPR033127">
    <property type="entry name" value="UBQ-activ_enz_E1_Cys_AS"/>
</dbReference>
<dbReference type="PANTHER" id="PTHR10953">
    <property type="entry name" value="UBIQUITIN-ACTIVATING ENZYME E1"/>
    <property type="match status" value="1"/>
</dbReference>
<dbReference type="PANTHER" id="PTHR10953:SF155">
    <property type="entry name" value="UBIQUITIN-LIKE MODIFIER-ACTIVATING ENZYME 1"/>
    <property type="match status" value="1"/>
</dbReference>
<dbReference type="Pfam" id="PF00899">
    <property type="entry name" value="ThiF"/>
    <property type="match status" value="1"/>
</dbReference>
<dbReference type="Pfam" id="PF10585">
    <property type="entry name" value="UBA_E1_SCCH"/>
    <property type="match status" value="1"/>
</dbReference>
<dbReference type="SUPFAM" id="SSF69572">
    <property type="entry name" value="Activating enzymes of the ubiquitin-like proteins"/>
    <property type="match status" value="1"/>
</dbReference>
<dbReference type="PROSITE" id="PS00865">
    <property type="entry name" value="UBIQUITIN_ACTIVAT_2"/>
    <property type="match status" value="1"/>
</dbReference>
<protein>
    <recommendedName>
        <fullName>Ubiquitin-activating enzyme E1 Y</fullName>
        <ecNumber evidence="2">6.2.1.45</ecNumber>
    </recommendedName>
</protein>